<gene>
    <name evidence="5" type="primary">gamA</name>
    <name type="synonym">ybfT</name>
    <name type="ordered locus">BSU02360</name>
</gene>
<organism>
    <name type="scientific">Bacillus subtilis (strain 168)</name>
    <dbReference type="NCBI Taxonomy" id="224308"/>
    <lineage>
        <taxon>Bacteria</taxon>
        <taxon>Bacillati</taxon>
        <taxon>Bacillota</taxon>
        <taxon>Bacilli</taxon>
        <taxon>Bacillales</taxon>
        <taxon>Bacillaceae</taxon>
        <taxon>Bacillus</taxon>
    </lineage>
</organism>
<reference key="1">
    <citation type="submission" date="1997-07" db="EMBL/GenBank/DDBJ databases">
        <title>Sequence analysis of the 70kb region between 17 and 23 degree of the Bacillus subtilis chromosome.</title>
        <authorList>
            <person name="Haga K."/>
            <person name="Liu H."/>
            <person name="Yasumoto K."/>
            <person name="Takahashi H."/>
            <person name="Yoshikawa H."/>
        </authorList>
    </citation>
    <scope>NUCLEOTIDE SEQUENCE [GENOMIC DNA]</scope>
    <source>
        <strain>168</strain>
    </source>
</reference>
<reference key="2">
    <citation type="journal article" date="1997" name="Nature">
        <title>The complete genome sequence of the Gram-positive bacterium Bacillus subtilis.</title>
        <authorList>
            <person name="Kunst F."/>
            <person name="Ogasawara N."/>
            <person name="Moszer I."/>
            <person name="Albertini A.M."/>
            <person name="Alloni G."/>
            <person name="Azevedo V."/>
            <person name="Bertero M.G."/>
            <person name="Bessieres P."/>
            <person name="Bolotin A."/>
            <person name="Borchert S."/>
            <person name="Borriss R."/>
            <person name="Boursier L."/>
            <person name="Brans A."/>
            <person name="Braun M."/>
            <person name="Brignell S.C."/>
            <person name="Bron S."/>
            <person name="Brouillet S."/>
            <person name="Bruschi C.V."/>
            <person name="Caldwell B."/>
            <person name="Capuano V."/>
            <person name="Carter N.M."/>
            <person name="Choi S.-K."/>
            <person name="Codani J.-J."/>
            <person name="Connerton I.F."/>
            <person name="Cummings N.J."/>
            <person name="Daniel R.A."/>
            <person name="Denizot F."/>
            <person name="Devine K.M."/>
            <person name="Duesterhoeft A."/>
            <person name="Ehrlich S.D."/>
            <person name="Emmerson P.T."/>
            <person name="Entian K.-D."/>
            <person name="Errington J."/>
            <person name="Fabret C."/>
            <person name="Ferrari E."/>
            <person name="Foulger D."/>
            <person name="Fritz C."/>
            <person name="Fujita M."/>
            <person name="Fujita Y."/>
            <person name="Fuma S."/>
            <person name="Galizzi A."/>
            <person name="Galleron N."/>
            <person name="Ghim S.-Y."/>
            <person name="Glaser P."/>
            <person name="Goffeau A."/>
            <person name="Golightly E.J."/>
            <person name="Grandi G."/>
            <person name="Guiseppi G."/>
            <person name="Guy B.J."/>
            <person name="Haga K."/>
            <person name="Haiech J."/>
            <person name="Harwood C.R."/>
            <person name="Henaut A."/>
            <person name="Hilbert H."/>
            <person name="Holsappel S."/>
            <person name="Hosono S."/>
            <person name="Hullo M.-F."/>
            <person name="Itaya M."/>
            <person name="Jones L.-M."/>
            <person name="Joris B."/>
            <person name="Karamata D."/>
            <person name="Kasahara Y."/>
            <person name="Klaerr-Blanchard M."/>
            <person name="Klein C."/>
            <person name="Kobayashi Y."/>
            <person name="Koetter P."/>
            <person name="Koningstein G."/>
            <person name="Krogh S."/>
            <person name="Kumano M."/>
            <person name="Kurita K."/>
            <person name="Lapidus A."/>
            <person name="Lardinois S."/>
            <person name="Lauber J."/>
            <person name="Lazarevic V."/>
            <person name="Lee S.-M."/>
            <person name="Levine A."/>
            <person name="Liu H."/>
            <person name="Masuda S."/>
            <person name="Mauel C."/>
            <person name="Medigue C."/>
            <person name="Medina N."/>
            <person name="Mellado R.P."/>
            <person name="Mizuno M."/>
            <person name="Moestl D."/>
            <person name="Nakai S."/>
            <person name="Noback M."/>
            <person name="Noone D."/>
            <person name="O'Reilly M."/>
            <person name="Ogawa K."/>
            <person name="Ogiwara A."/>
            <person name="Oudega B."/>
            <person name="Park S.-H."/>
            <person name="Parro V."/>
            <person name="Pohl T.M."/>
            <person name="Portetelle D."/>
            <person name="Porwollik S."/>
            <person name="Prescott A.M."/>
            <person name="Presecan E."/>
            <person name="Pujic P."/>
            <person name="Purnelle B."/>
            <person name="Rapoport G."/>
            <person name="Rey M."/>
            <person name="Reynolds S."/>
            <person name="Rieger M."/>
            <person name="Rivolta C."/>
            <person name="Rocha E."/>
            <person name="Roche B."/>
            <person name="Rose M."/>
            <person name="Sadaie Y."/>
            <person name="Sato T."/>
            <person name="Scanlan E."/>
            <person name="Schleich S."/>
            <person name="Schroeter R."/>
            <person name="Scoffone F."/>
            <person name="Sekiguchi J."/>
            <person name="Sekowska A."/>
            <person name="Seror S.J."/>
            <person name="Serror P."/>
            <person name="Shin B.-S."/>
            <person name="Soldo B."/>
            <person name="Sorokin A."/>
            <person name="Tacconi E."/>
            <person name="Takagi T."/>
            <person name="Takahashi H."/>
            <person name="Takemaru K."/>
            <person name="Takeuchi M."/>
            <person name="Tamakoshi A."/>
            <person name="Tanaka T."/>
            <person name="Terpstra P."/>
            <person name="Tognoni A."/>
            <person name="Tosato V."/>
            <person name="Uchiyama S."/>
            <person name="Vandenbol M."/>
            <person name="Vannier F."/>
            <person name="Vassarotti A."/>
            <person name="Viari A."/>
            <person name="Wambutt R."/>
            <person name="Wedler E."/>
            <person name="Wedler H."/>
            <person name="Weitzenegger T."/>
            <person name="Winters P."/>
            <person name="Wipat A."/>
            <person name="Yamamoto H."/>
            <person name="Yamane K."/>
            <person name="Yasumoto K."/>
            <person name="Yata K."/>
            <person name="Yoshida K."/>
            <person name="Yoshikawa H.-F."/>
            <person name="Zumstein E."/>
            <person name="Yoshikawa H."/>
            <person name="Danchin A."/>
        </authorList>
    </citation>
    <scope>NUCLEOTIDE SEQUENCE [LARGE SCALE GENOMIC DNA]</scope>
    <source>
        <strain>168</strain>
    </source>
</reference>
<reference key="3">
    <citation type="journal article" date="1999" name="Microbiology">
        <title>Novel phosphotransferase system genes revealed by genome analysis - the complete complement of PTS proteins encoded within the genome of Bacillus subtilis.</title>
        <authorList>
            <person name="Reizer J."/>
            <person name="Bachem S."/>
            <person name="Reizer A."/>
            <person name="Arnaud M."/>
            <person name="Saier M.H. Jr."/>
            <person name="Stuelke J."/>
        </authorList>
    </citation>
    <scope>GENE NAME</scope>
    <scope>OPERON STRUCTURE</scope>
</reference>
<reference key="4">
    <citation type="journal article" date="2013" name="PLoS ONE">
        <title>The use of amino sugars by Bacillus subtilis: presence of a unique operon for the catabolism of glucosamine.</title>
        <authorList>
            <person name="Gaugue I."/>
            <person name="Oberto J."/>
            <person name="Putzer H."/>
            <person name="Plumbridge J."/>
        </authorList>
    </citation>
    <scope>FUNCTION</scope>
    <scope>INDUCTION</scope>
    <scope>DISRUPTION PHENOTYPE</scope>
    <source>
        <strain>168</strain>
    </source>
</reference>
<reference key="5">
    <citation type="journal article" date="2014" name="Mol. Microbiol.">
        <title>Regulation of amino sugar utilization in Bacillus subtilis by the GntR family regulators, NagR and GamR.</title>
        <authorList>
            <person name="Gaugue I."/>
            <person name="Oberto J."/>
            <person name="Plumbridge J."/>
        </authorList>
    </citation>
    <scope>INDUCTION</scope>
</reference>
<evidence type="ECO:0000255" key="1">
    <source>
        <dbReference type="HAMAP-Rule" id="MF_01241"/>
    </source>
</evidence>
<evidence type="ECO:0000269" key="2">
    <source>
    </source>
</evidence>
<evidence type="ECO:0000269" key="3">
    <source>
    </source>
</evidence>
<evidence type="ECO:0000269" key="4">
    <source>
    </source>
</evidence>
<evidence type="ECO:0000303" key="5">
    <source>
    </source>
</evidence>
<dbReference type="EC" id="3.5.99.6" evidence="1"/>
<dbReference type="EMBL" id="AB006424">
    <property type="protein sequence ID" value="BAA33133.1"/>
    <property type="molecule type" value="Genomic_DNA"/>
</dbReference>
<dbReference type="EMBL" id="AL009126">
    <property type="protein sequence ID" value="CAB12030.1"/>
    <property type="molecule type" value="Genomic_DNA"/>
</dbReference>
<dbReference type="PIR" id="E69750">
    <property type="entry name" value="E69750"/>
</dbReference>
<dbReference type="RefSeq" id="NP_388118.1">
    <property type="nucleotide sequence ID" value="NC_000964.3"/>
</dbReference>
<dbReference type="SMR" id="O31458"/>
<dbReference type="FunCoup" id="O31458">
    <property type="interactions" value="465"/>
</dbReference>
<dbReference type="STRING" id="224308.BSU02360"/>
<dbReference type="PaxDb" id="224308-BSU02360"/>
<dbReference type="EnsemblBacteria" id="CAB12030">
    <property type="protein sequence ID" value="CAB12030"/>
    <property type="gene ID" value="BSU_02360"/>
</dbReference>
<dbReference type="GeneID" id="938425"/>
<dbReference type="KEGG" id="bsu:BSU02360"/>
<dbReference type="PATRIC" id="fig|224308.179.peg.242"/>
<dbReference type="eggNOG" id="COG0363">
    <property type="taxonomic scope" value="Bacteria"/>
</dbReference>
<dbReference type="InParanoid" id="O31458"/>
<dbReference type="OrthoDB" id="9791139at2"/>
<dbReference type="PhylomeDB" id="O31458"/>
<dbReference type="BioCyc" id="BSUB:BSU02360-MONOMER"/>
<dbReference type="UniPathway" id="UPA00629">
    <property type="reaction ID" value="UER00684"/>
</dbReference>
<dbReference type="Proteomes" id="UP000001570">
    <property type="component" value="Chromosome"/>
</dbReference>
<dbReference type="GO" id="GO:0005737">
    <property type="term" value="C:cytoplasm"/>
    <property type="evidence" value="ECO:0000318"/>
    <property type="project" value="GO_Central"/>
</dbReference>
<dbReference type="GO" id="GO:0004342">
    <property type="term" value="F:glucosamine-6-phosphate deaminase activity"/>
    <property type="evidence" value="ECO:0000318"/>
    <property type="project" value="GO_Central"/>
</dbReference>
<dbReference type="GO" id="GO:0042802">
    <property type="term" value="F:identical protein binding"/>
    <property type="evidence" value="ECO:0000318"/>
    <property type="project" value="GO_Central"/>
</dbReference>
<dbReference type="GO" id="GO:0005975">
    <property type="term" value="P:carbohydrate metabolic process"/>
    <property type="evidence" value="ECO:0007669"/>
    <property type="project" value="InterPro"/>
</dbReference>
<dbReference type="GO" id="GO:0006043">
    <property type="term" value="P:glucosamine catabolic process"/>
    <property type="evidence" value="ECO:0000318"/>
    <property type="project" value="GO_Central"/>
</dbReference>
<dbReference type="GO" id="GO:0006046">
    <property type="term" value="P:N-acetylglucosamine catabolic process"/>
    <property type="evidence" value="ECO:0000318"/>
    <property type="project" value="GO_Central"/>
</dbReference>
<dbReference type="GO" id="GO:0019262">
    <property type="term" value="P:N-acetylneuraminate catabolic process"/>
    <property type="evidence" value="ECO:0000318"/>
    <property type="project" value="GO_Central"/>
</dbReference>
<dbReference type="CDD" id="cd01399">
    <property type="entry name" value="GlcN6P_deaminase"/>
    <property type="match status" value="1"/>
</dbReference>
<dbReference type="FunFam" id="3.40.50.1360:FF:000003">
    <property type="entry name" value="Glucosamine-6-phosphate deaminase"/>
    <property type="match status" value="1"/>
</dbReference>
<dbReference type="Gene3D" id="3.40.50.1360">
    <property type="match status" value="1"/>
</dbReference>
<dbReference type="HAMAP" id="MF_01241">
    <property type="entry name" value="GlcN6P_deamin"/>
    <property type="match status" value="1"/>
</dbReference>
<dbReference type="InterPro" id="IPR006148">
    <property type="entry name" value="Glc/Gal-6P_isomerase"/>
</dbReference>
<dbReference type="InterPro" id="IPR004547">
    <property type="entry name" value="Glucosamine6P_isomerase"/>
</dbReference>
<dbReference type="InterPro" id="IPR018321">
    <property type="entry name" value="Glucosamine6P_isomerase_CS"/>
</dbReference>
<dbReference type="InterPro" id="IPR037171">
    <property type="entry name" value="NagB/RpiA_transferase-like"/>
</dbReference>
<dbReference type="NCBIfam" id="TIGR00502">
    <property type="entry name" value="nagB"/>
    <property type="match status" value="1"/>
</dbReference>
<dbReference type="PANTHER" id="PTHR11280">
    <property type="entry name" value="GLUCOSAMINE-6-PHOSPHATE ISOMERASE"/>
    <property type="match status" value="1"/>
</dbReference>
<dbReference type="PANTHER" id="PTHR11280:SF5">
    <property type="entry name" value="GLUCOSAMINE-6-PHOSPHATE ISOMERASE"/>
    <property type="match status" value="1"/>
</dbReference>
<dbReference type="Pfam" id="PF01182">
    <property type="entry name" value="Glucosamine_iso"/>
    <property type="match status" value="1"/>
</dbReference>
<dbReference type="SUPFAM" id="SSF100950">
    <property type="entry name" value="NagB/RpiA/CoA transferase-like"/>
    <property type="match status" value="1"/>
</dbReference>
<dbReference type="PROSITE" id="PS01161">
    <property type="entry name" value="GLC_GALNAC_ISOMERASE"/>
    <property type="match status" value="1"/>
</dbReference>
<feature type="chain" id="PRO_0000160134" description="Glucosamine-6-phosphate deaminase 2">
    <location>
        <begin position="1"/>
        <end position="249"/>
    </location>
</feature>
<feature type="active site" description="Proton acceptor; for enolization step" evidence="1">
    <location>
        <position position="67"/>
    </location>
</feature>
<feature type="active site" description="For ring-opening step" evidence="1">
    <location>
        <position position="136"/>
    </location>
</feature>
<feature type="active site" description="Proton acceptor; for ring-opening step" evidence="1">
    <location>
        <position position="138"/>
    </location>
</feature>
<feature type="active site" description="For ring-opening step" evidence="1">
    <location>
        <position position="143"/>
    </location>
</feature>
<keyword id="KW-0119">Carbohydrate metabolism</keyword>
<keyword id="KW-0378">Hydrolase</keyword>
<keyword id="KW-1185">Reference proteome</keyword>
<accession>O31458</accession>
<name>GAMA_BACSU</name>
<protein>
    <recommendedName>
        <fullName evidence="1">Glucosamine-6-phosphate deaminase 2</fullName>
        <ecNumber evidence="1">3.5.99.6</ecNumber>
    </recommendedName>
    <alternativeName>
        <fullName evidence="1">GlcN6P deaminase 2</fullName>
        <shortName evidence="1">GNPDA 2</shortName>
    </alternativeName>
    <alternativeName>
        <fullName evidence="1">Glucosamine-6-phosphate isomerase 2</fullName>
    </alternativeName>
</protein>
<sequence>MKILIAEHYEELCKLSAAIIKEQIQAKKDAVLGLATGSTPVGLYKQLISDYQAGEIDFSKVTTFNLDEYAGLSPSHPQSYNHFMHEHLFQHINMQPDHIHIPQGDNPQLEAACKVYEDLIRQAGGIDVQILGIGANGHIGFNEPGSDFEDRTRVVKLSESTIQANARFFGGDPVLVPRLAISMGIKTIMEFSKHIVLLASGEEKADAIQKMAEGPVTTDVPASILQKHNHVTVIADYKAAQKLKSASFS</sequence>
<comment type="function">
    <text evidence="1 3">Catalyzes the reversible isomerization-deamination of glucosamine 6-phosphate (GlcN6P) to form fructose 6-phosphate (Fru6P) and ammonium ion (By similarity). Required for growth on glucosamine and also provides the majority of GlcN6P deaminase activity during growth on N-acetylglucosamine (GlcNAc) (PubMed:23667565).</text>
</comment>
<comment type="catalytic activity">
    <reaction evidence="1">
        <text>alpha-D-glucosamine 6-phosphate + H2O = beta-D-fructose 6-phosphate + NH4(+)</text>
        <dbReference type="Rhea" id="RHEA:12172"/>
        <dbReference type="ChEBI" id="CHEBI:15377"/>
        <dbReference type="ChEBI" id="CHEBI:28938"/>
        <dbReference type="ChEBI" id="CHEBI:57634"/>
        <dbReference type="ChEBI" id="CHEBI:75989"/>
        <dbReference type="EC" id="3.5.99.6"/>
    </reaction>
</comment>
<comment type="pathway">
    <text evidence="1">Amino-sugar metabolism; N-acetylneuraminate degradation; D-fructose 6-phosphate from N-acetylneuraminate: step 5/5.</text>
</comment>
<comment type="induction">
    <text evidence="2 3 4">Part of the gamAP operon (PubMed:10627040). Strongly expressed during growth on glucosamine (PubMed:23667565). Expression is repressed by the HTH-type transcriptional regulator GamR (PubMed:23667565, PubMed:24673833).</text>
</comment>
<comment type="disruption phenotype">
    <text evidence="3">Deletion of the gene prevents nearly all growth on glucosamine and severely reduces growth on N-acetylglucosamine (PubMed:23667565). The gamA-nagB double mutant cannot grow on glucosamine or N-acetylglucosamine (PubMed:23667565).</text>
</comment>
<comment type="miscellaneous">
    <text evidence="3">The gamA and nagB genes encode isozymes of GlcN6P deaminase.</text>
</comment>
<comment type="similarity">
    <text evidence="1">Belongs to the glucosamine/galactosamine-6-phosphate isomerase family. NagB subfamily.</text>
</comment>
<proteinExistence type="evidence at transcript level"/>